<reference key="1">
    <citation type="journal article" date="2009" name="Genome Res.">
        <title>Newly introduced genomic prophage islands are critical determinants of in vivo competitiveness in the Liverpool epidemic strain of Pseudomonas aeruginosa.</title>
        <authorList>
            <person name="Winstanley C."/>
            <person name="Langille M.G.I."/>
            <person name="Fothergill J.L."/>
            <person name="Kukavica-Ibrulj I."/>
            <person name="Paradis-Bleau C."/>
            <person name="Sanschagrin F."/>
            <person name="Thomson N.R."/>
            <person name="Winsor G.L."/>
            <person name="Quail M.A."/>
            <person name="Lennard N."/>
            <person name="Bignell A."/>
            <person name="Clarke L."/>
            <person name="Seeger K."/>
            <person name="Saunders D."/>
            <person name="Harris D."/>
            <person name="Parkhill J."/>
            <person name="Hancock R.E.W."/>
            <person name="Brinkman F.S.L."/>
            <person name="Levesque R.C."/>
        </authorList>
    </citation>
    <scope>NUCLEOTIDE SEQUENCE [LARGE SCALE GENOMIC DNA]</scope>
    <source>
        <strain>LESB58</strain>
    </source>
</reference>
<evidence type="ECO:0000255" key="1">
    <source>
        <dbReference type="HAMAP-Rule" id="MF_01219"/>
    </source>
</evidence>
<proteinExistence type="inferred from homology"/>
<name>PYRR_PSEA8</name>
<feature type="chain" id="PRO_1000139205" description="Bifunctional protein PyrR">
    <location>
        <begin position="1"/>
        <end position="170"/>
    </location>
</feature>
<feature type="short sequence motif" description="PRPP-binding" evidence="1">
    <location>
        <begin position="90"/>
        <end position="102"/>
    </location>
</feature>
<gene>
    <name evidence="1" type="primary">pyrR</name>
    <name type="ordered locus">PLES_04011</name>
</gene>
<protein>
    <recommendedName>
        <fullName evidence="1">Bifunctional protein PyrR</fullName>
    </recommendedName>
    <domain>
        <recommendedName>
            <fullName evidence="1">Pyrimidine operon regulatory protein</fullName>
        </recommendedName>
    </domain>
    <domain>
        <recommendedName>
            <fullName evidence="1">Uracil phosphoribosyltransferase</fullName>
            <shortName evidence="1">UPRTase</shortName>
            <ecNumber evidence="1">2.4.2.9</ecNumber>
        </recommendedName>
    </domain>
</protein>
<accession>B7V3Z0</accession>
<keyword id="KW-0328">Glycosyltransferase</keyword>
<keyword id="KW-0804">Transcription</keyword>
<keyword id="KW-0805">Transcription regulation</keyword>
<keyword id="KW-0808">Transferase</keyword>
<comment type="function">
    <text evidence="1">Regulates the transcription of the pyrimidine nucleotide (pyr) operon in response to exogenous pyrimidines.</text>
</comment>
<comment type="function">
    <text evidence="1">Also displays a weak uracil phosphoribosyltransferase activity which is not physiologically significant.</text>
</comment>
<comment type="catalytic activity">
    <reaction evidence="1">
        <text>UMP + diphosphate = 5-phospho-alpha-D-ribose 1-diphosphate + uracil</text>
        <dbReference type="Rhea" id="RHEA:13017"/>
        <dbReference type="ChEBI" id="CHEBI:17568"/>
        <dbReference type="ChEBI" id="CHEBI:33019"/>
        <dbReference type="ChEBI" id="CHEBI:57865"/>
        <dbReference type="ChEBI" id="CHEBI:58017"/>
        <dbReference type="EC" id="2.4.2.9"/>
    </reaction>
</comment>
<comment type="similarity">
    <text evidence="1">Belongs to the purine/pyrimidine phosphoribosyltransferase family. PyrR subfamily.</text>
</comment>
<organism>
    <name type="scientific">Pseudomonas aeruginosa (strain LESB58)</name>
    <dbReference type="NCBI Taxonomy" id="557722"/>
    <lineage>
        <taxon>Bacteria</taxon>
        <taxon>Pseudomonadati</taxon>
        <taxon>Pseudomonadota</taxon>
        <taxon>Gammaproteobacteria</taxon>
        <taxon>Pseudomonadales</taxon>
        <taxon>Pseudomonadaceae</taxon>
        <taxon>Pseudomonas</taxon>
    </lineage>
</organism>
<sequence>MSLPNPAELLPRMASDLRAHLAERGIERPRFVGIHTGGIWVAEALLRELGNQEPLGTLDVSFYRDDFTQNGLHPQVRPSALPFEIDGQHLVLVDDVLMSGRTIRAALNELFDYGRPASVTLVCLLDLNARELPIRPDVVGQTLSLGRDERVKLVGPAPLALERKVLSSAS</sequence>
<dbReference type="EC" id="2.4.2.9" evidence="1"/>
<dbReference type="EMBL" id="FM209186">
    <property type="protein sequence ID" value="CAW25128.1"/>
    <property type="molecule type" value="Genomic_DNA"/>
</dbReference>
<dbReference type="RefSeq" id="WP_003084574.1">
    <property type="nucleotide sequence ID" value="NC_011770.1"/>
</dbReference>
<dbReference type="SMR" id="B7V3Z0"/>
<dbReference type="KEGG" id="pag:PLES_04011"/>
<dbReference type="HOGENOM" id="CLU_094234_1_1_6"/>
<dbReference type="GO" id="GO:0004845">
    <property type="term" value="F:uracil phosphoribosyltransferase activity"/>
    <property type="evidence" value="ECO:0007669"/>
    <property type="project" value="UniProtKB-UniRule"/>
</dbReference>
<dbReference type="GO" id="GO:0006355">
    <property type="term" value="P:regulation of DNA-templated transcription"/>
    <property type="evidence" value="ECO:0007669"/>
    <property type="project" value="UniProtKB-UniRule"/>
</dbReference>
<dbReference type="CDD" id="cd06223">
    <property type="entry name" value="PRTases_typeI"/>
    <property type="match status" value="1"/>
</dbReference>
<dbReference type="Gene3D" id="3.40.50.2020">
    <property type="match status" value="1"/>
</dbReference>
<dbReference type="HAMAP" id="MF_01219">
    <property type="entry name" value="PyrR"/>
    <property type="match status" value="1"/>
</dbReference>
<dbReference type="InterPro" id="IPR000836">
    <property type="entry name" value="PRibTrfase_dom"/>
</dbReference>
<dbReference type="InterPro" id="IPR029057">
    <property type="entry name" value="PRTase-like"/>
</dbReference>
<dbReference type="InterPro" id="IPR023050">
    <property type="entry name" value="PyrR"/>
</dbReference>
<dbReference type="InterPro" id="IPR050137">
    <property type="entry name" value="PyrR_bifunctional"/>
</dbReference>
<dbReference type="NCBIfam" id="NF003545">
    <property type="entry name" value="PRK05205.1-1"/>
    <property type="match status" value="1"/>
</dbReference>
<dbReference type="PANTHER" id="PTHR11608">
    <property type="entry name" value="BIFUNCTIONAL PROTEIN PYRR"/>
    <property type="match status" value="1"/>
</dbReference>
<dbReference type="PANTHER" id="PTHR11608:SF0">
    <property type="entry name" value="BIFUNCTIONAL PROTEIN PYRR"/>
    <property type="match status" value="1"/>
</dbReference>
<dbReference type="Pfam" id="PF00156">
    <property type="entry name" value="Pribosyltran"/>
    <property type="match status" value="1"/>
</dbReference>
<dbReference type="SUPFAM" id="SSF53271">
    <property type="entry name" value="PRTase-like"/>
    <property type="match status" value="1"/>
</dbReference>